<name>Y752_TREPA</name>
<protein>
    <recommendedName>
        <fullName>Uncharacterized protein TP_0752</fullName>
    </recommendedName>
</protein>
<sequence>MQFLSDTQRMVLSRAVCASFFFFHVAVAAYTARVQEMAMRGFALRNFQQVHAYFEQHIPLLSSFTEKKEALSLFAQYLELHDAHERAAHRYRDAALYALGTERVQFLLEATRNAMAADAREYARETLAEVEHIGVQVLNKKQHATFLVYHVWLALHAASTAAHLHEQLERLEEYGTQGVFNVFETVLLFTRWWITQDEKVAQRLTERYPQSFEALSVIGAVEIAPSVFWHLMPRAYGEAVESMGKSETVVLQDAKLRPVPEVVAAHRTRRAHVAADGTAARSAMSSSHNLGVSILEGGVSVPDEVGAGDEKPRGYQLGFFRAKENAQRLMDDLERRGFGFQLHTVRRADAVYYQVFVPEDDSGFVGHRLKDAGYETFPLF</sequence>
<dbReference type="EMBL" id="AE000520">
    <property type="protein sequence ID" value="AAC65729.1"/>
    <property type="molecule type" value="Genomic_DNA"/>
</dbReference>
<dbReference type="PIR" id="C71284">
    <property type="entry name" value="C71284"/>
</dbReference>
<dbReference type="SMR" id="O83733"/>
<dbReference type="IntAct" id="O83733">
    <property type="interactions" value="8"/>
</dbReference>
<dbReference type="STRING" id="243276.TP_0752"/>
<dbReference type="EnsemblBacteria" id="AAC65729">
    <property type="protein sequence ID" value="AAC65729"/>
    <property type="gene ID" value="TP_0752"/>
</dbReference>
<dbReference type="KEGG" id="tpa:TP_0752"/>
<dbReference type="KEGG" id="tpw:TPANIC_0752"/>
<dbReference type="eggNOG" id="ENOG5032KME">
    <property type="taxonomic scope" value="Bacteria"/>
</dbReference>
<dbReference type="HOGENOM" id="CLU_747921_0_0_12"/>
<dbReference type="OrthoDB" id="359451at2"/>
<dbReference type="Proteomes" id="UP000000811">
    <property type="component" value="Chromosome"/>
</dbReference>
<dbReference type="GO" id="GO:0042834">
    <property type="term" value="F:peptidoglycan binding"/>
    <property type="evidence" value="ECO:0007669"/>
    <property type="project" value="InterPro"/>
</dbReference>
<dbReference type="InterPro" id="IPR007730">
    <property type="entry name" value="SPOR-like_dom"/>
</dbReference>
<dbReference type="PROSITE" id="PS51724">
    <property type="entry name" value="SPOR"/>
    <property type="match status" value="1"/>
</dbReference>
<gene>
    <name type="ordered locus">TP_0752</name>
</gene>
<feature type="signal peptide" evidence="1">
    <location>
        <begin position="1"/>
        <end position="28"/>
    </location>
</feature>
<feature type="chain" id="PRO_0000014258" description="Uncharacterized protein TP_0752">
    <location>
        <begin position="29"/>
        <end position="380"/>
    </location>
</feature>
<feature type="domain" description="SPOR">
    <location>
        <begin position="307"/>
        <end position="380"/>
    </location>
</feature>
<evidence type="ECO:0000255" key="1"/>
<organism>
    <name type="scientific">Treponema pallidum (strain Nichols)</name>
    <dbReference type="NCBI Taxonomy" id="243276"/>
    <lineage>
        <taxon>Bacteria</taxon>
        <taxon>Pseudomonadati</taxon>
        <taxon>Spirochaetota</taxon>
        <taxon>Spirochaetia</taxon>
        <taxon>Spirochaetales</taxon>
        <taxon>Treponemataceae</taxon>
        <taxon>Treponema</taxon>
    </lineage>
</organism>
<proteinExistence type="inferred from homology"/>
<reference key="1">
    <citation type="journal article" date="1998" name="Science">
        <title>Complete genome sequence of Treponema pallidum, the syphilis spirochete.</title>
        <authorList>
            <person name="Fraser C.M."/>
            <person name="Norris S.J."/>
            <person name="Weinstock G.M."/>
            <person name="White O."/>
            <person name="Sutton G.G."/>
            <person name="Dodson R.J."/>
            <person name="Gwinn M.L."/>
            <person name="Hickey E.K."/>
            <person name="Clayton R.A."/>
            <person name="Ketchum K.A."/>
            <person name="Sodergren E."/>
            <person name="Hardham J.M."/>
            <person name="McLeod M.P."/>
            <person name="Salzberg S.L."/>
            <person name="Peterson J.D."/>
            <person name="Khalak H.G."/>
            <person name="Richardson D.L."/>
            <person name="Howell J.K."/>
            <person name="Chidambaram M."/>
            <person name="Utterback T.R."/>
            <person name="McDonald L.A."/>
            <person name="Artiach P."/>
            <person name="Bowman C."/>
            <person name="Cotton M.D."/>
            <person name="Fujii C."/>
            <person name="Garland S.A."/>
            <person name="Hatch B."/>
            <person name="Horst K."/>
            <person name="Roberts K.M."/>
            <person name="Sandusky M."/>
            <person name="Weidman J.F."/>
            <person name="Smith H.O."/>
            <person name="Venter J.C."/>
        </authorList>
    </citation>
    <scope>NUCLEOTIDE SEQUENCE [LARGE SCALE GENOMIC DNA]</scope>
    <source>
        <strain>Nichols</strain>
    </source>
</reference>
<keyword id="KW-1185">Reference proteome</keyword>
<keyword id="KW-0732">Signal</keyword>
<accession>O83733</accession>